<gene>
    <name evidence="1" type="primary">tmk</name>
    <name type="ordered locus">stu0489</name>
</gene>
<keyword id="KW-0067">ATP-binding</keyword>
<keyword id="KW-0418">Kinase</keyword>
<keyword id="KW-0545">Nucleotide biosynthesis</keyword>
<keyword id="KW-0547">Nucleotide-binding</keyword>
<keyword id="KW-1185">Reference proteome</keyword>
<keyword id="KW-0808">Transferase</keyword>
<sequence>MSKGLLISIEGPDGAGKTSVLKVLLPRLREVYPAQVITTREPGGVAIAEQIREVILDIDNTAMDAKTELLLYIAARRQHLVEKVLPELENGNMVIMDRFIDSSVAYQGAGRGLDQDEVAWLNNYATDGHKPDLTLLFDVDSETGLARIAANGEREVNRLDLEKLDMHQRVRQGYLDLAEAEPERIKRIDASQTLEEVVEDTWEIIKSYL</sequence>
<feature type="chain" id="PRO_1000023298" description="Thymidylate kinase">
    <location>
        <begin position="1"/>
        <end position="209"/>
    </location>
</feature>
<feature type="binding site" evidence="1">
    <location>
        <begin position="11"/>
        <end position="18"/>
    </location>
    <ligand>
        <name>ATP</name>
        <dbReference type="ChEBI" id="CHEBI:30616"/>
    </ligand>
</feature>
<comment type="function">
    <text evidence="1">Phosphorylation of dTMP to form dTDP in both de novo and salvage pathways of dTTP synthesis.</text>
</comment>
<comment type="catalytic activity">
    <reaction evidence="1">
        <text>dTMP + ATP = dTDP + ADP</text>
        <dbReference type="Rhea" id="RHEA:13517"/>
        <dbReference type="ChEBI" id="CHEBI:30616"/>
        <dbReference type="ChEBI" id="CHEBI:58369"/>
        <dbReference type="ChEBI" id="CHEBI:63528"/>
        <dbReference type="ChEBI" id="CHEBI:456216"/>
        <dbReference type="EC" id="2.7.4.9"/>
    </reaction>
</comment>
<comment type="similarity">
    <text evidence="1">Belongs to the thymidylate kinase family.</text>
</comment>
<reference key="1">
    <citation type="journal article" date="2004" name="Nat. Biotechnol.">
        <title>Complete sequence and comparative genome analysis of the dairy bacterium Streptococcus thermophilus.</title>
        <authorList>
            <person name="Bolotin A."/>
            <person name="Quinquis B."/>
            <person name="Renault P."/>
            <person name="Sorokin A."/>
            <person name="Ehrlich S.D."/>
            <person name="Kulakauskas S."/>
            <person name="Lapidus A."/>
            <person name="Goltsman E."/>
            <person name="Mazur M."/>
            <person name="Pusch G.D."/>
            <person name="Fonstein M."/>
            <person name="Overbeek R."/>
            <person name="Kyprides N."/>
            <person name="Purnelle B."/>
            <person name="Prozzi D."/>
            <person name="Ngui K."/>
            <person name="Masuy D."/>
            <person name="Hancy F."/>
            <person name="Burteau S."/>
            <person name="Boutry M."/>
            <person name="Delcour J."/>
            <person name="Goffeau A."/>
            <person name="Hols P."/>
        </authorList>
    </citation>
    <scope>NUCLEOTIDE SEQUENCE [LARGE SCALE GENOMIC DNA]</scope>
    <source>
        <strain>ATCC BAA-250 / LMG 18311</strain>
    </source>
</reference>
<protein>
    <recommendedName>
        <fullName evidence="1">Thymidylate kinase</fullName>
        <ecNumber evidence="1">2.7.4.9</ecNumber>
    </recommendedName>
    <alternativeName>
        <fullName evidence="1">dTMP kinase</fullName>
    </alternativeName>
</protein>
<proteinExistence type="inferred from homology"/>
<dbReference type="EC" id="2.7.4.9" evidence="1"/>
<dbReference type="EMBL" id="CP000023">
    <property type="protein sequence ID" value="AAV60199.1"/>
    <property type="molecule type" value="Genomic_DNA"/>
</dbReference>
<dbReference type="RefSeq" id="WP_002946312.1">
    <property type="nucleotide sequence ID" value="NC_006448.1"/>
</dbReference>
<dbReference type="SMR" id="Q5M5I6"/>
<dbReference type="STRING" id="264199.stu0489"/>
<dbReference type="GeneID" id="66898399"/>
<dbReference type="KEGG" id="stl:stu0489"/>
<dbReference type="eggNOG" id="COG0125">
    <property type="taxonomic scope" value="Bacteria"/>
</dbReference>
<dbReference type="HOGENOM" id="CLU_049131_0_2_9"/>
<dbReference type="Proteomes" id="UP000001170">
    <property type="component" value="Chromosome"/>
</dbReference>
<dbReference type="GO" id="GO:0005829">
    <property type="term" value="C:cytosol"/>
    <property type="evidence" value="ECO:0007669"/>
    <property type="project" value="TreeGrafter"/>
</dbReference>
<dbReference type="GO" id="GO:0005524">
    <property type="term" value="F:ATP binding"/>
    <property type="evidence" value="ECO:0007669"/>
    <property type="project" value="UniProtKB-UniRule"/>
</dbReference>
<dbReference type="GO" id="GO:0004798">
    <property type="term" value="F:dTMP kinase activity"/>
    <property type="evidence" value="ECO:0007669"/>
    <property type="project" value="UniProtKB-UniRule"/>
</dbReference>
<dbReference type="GO" id="GO:0006233">
    <property type="term" value="P:dTDP biosynthetic process"/>
    <property type="evidence" value="ECO:0007669"/>
    <property type="project" value="InterPro"/>
</dbReference>
<dbReference type="GO" id="GO:0006235">
    <property type="term" value="P:dTTP biosynthetic process"/>
    <property type="evidence" value="ECO:0007669"/>
    <property type="project" value="UniProtKB-UniRule"/>
</dbReference>
<dbReference type="GO" id="GO:0006227">
    <property type="term" value="P:dUDP biosynthetic process"/>
    <property type="evidence" value="ECO:0007669"/>
    <property type="project" value="TreeGrafter"/>
</dbReference>
<dbReference type="CDD" id="cd01672">
    <property type="entry name" value="TMPK"/>
    <property type="match status" value="1"/>
</dbReference>
<dbReference type="FunFam" id="3.40.50.300:FF:000225">
    <property type="entry name" value="Thymidylate kinase"/>
    <property type="match status" value="1"/>
</dbReference>
<dbReference type="Gene3D" id="3.40.50.300">
    <property type="entry name" value="P-loop containing nucleotide triphosphate hydrolases"/>
    <property type="match status" value="1"/>
</dbReference>
<dbReference type="HAMAP" id="MF_00165">
    <property type="entry name" value="Thymidylate_kinase"/>
    <property type="match status" value="1"/>
</dbReference>
<dbReference type="InterPro" id="IPR027417">
    <property type="entry name" value="P-loop_NTPase"/>
</dbReference>
<dbReference type="InterPro" id="IPR039430">
    <property type="entry name" value="Thymidylate_kin-like_dom"/>
</dbReference>
<dbReference type="InterPro" id="IPR018095">
    <property type="entry name" value="Thymidylate_kin_CS"/>
</dbReference>
<dbReference type="InterPro" id="IPR018094">
    <property type="entry name" value="Thymidylate_kinase"/>
</dbReference>
<dbReference type="NCBIfam" id="TIGR00041">
    <property type="entry name" value="DTMP_kinase"/>
    <property type="match status" value="1"/>
</dbReference>
<dbReference type="PANTHER" id="PTHR10344">
    <property type="entry name" value="THYMIDYLATE KINASE"/>
    <property type="match status" value="1"/>
</dbReference>
<dbReference type="PANTHER" id="PTHR10344:SF4">
    <property type="entry name" value="UMP-CMP KINASE 2, MITOCHONDRIAL"/>
    <property type="match status" value="1"/>
</dbReference>
<dbReference type="Pfam" id="PF02223">
    <property type="entry name" value="Thymidylate_kin"/>
    <property type="match status" value="1"/>
</dbReference>
<dbReference type="SUPFAM" id="SSF52540">
    <property type="entry name" value="P-loop containing nucleoside triphosphate hydrolases"/>
    <property type="match status" value="1"/>
</dbReference>
<dbReference type="PROSITE" id="PS01331">
    <property type="entry name" value="THYMIDYLATE_KINASE"/>
    <property type="match status" value="1"/>
</dbReference>
<organism>
    <name type="scientific">Streptococcus thermophilus (strain ATCC BAA-250 / LMG 18311)</name>
    <dbReference type="NCBI Taxonomy" id="264199"/>
    <lineage>
        <taxon>Bacteria</taxon>
        <taxon>Bacillati</taxon>
        <taxon>Bacillota</taxon>
        <taxon>Bacilli</taxon>
        <taxon>Lactobacillales</taxon>
        <taxon>Streptococcaceae</taxon>
        <taxon>Streptococcus</taxon>
    </lineage>
</organism>
<evidence type="ECO:0000255" key="1">
    <source>
        <dbReference type="HAMAP-Rule" id="MF_00165"/>
    </source>
</evidence>
<name>KTHY_STRT2</name>
<accession>Q5M5I6</accession>